<protein>
    <recommendedName>
        <fullName>11-beta-hydroxysteroid dehydrogenase-like 4B</fullName>
        <ecNumber>1.1.1.-</ecNumber>
    </recommendedName>
    <alternativeName>
        <fullName>17-beta-hydroxysteroid dehydrogenase-like 4B</fullName>
        <ecNumber>1.1.1.-</ecNumber>
    </alternativeName>
    <alternativeName>
        <fullName>Hydroxysteroid dehydrogenase 7</fullName>
        <shortName>AtHSD7</shortName>
    </alternativeName>
</protein>
<feature type="chain" id="PRO_0000422283" description="11-beta-hydroxysteroid dehydrogenase-like 4B">
    <location>
        <begin position="1"/>
        <end position="299"/>
    </location>
</feature>
<feature type="transmembrane region" description="Helical; Signal-anchor for type II membrane protein" evidence="2">
    <location>
        <begin position="10"/>
        <end position="30"/>
    </location>
</feature>
<feature type="active site" description="Proton acceptor" evidence="3">
    <location>
        <position position="197"/>
    </location>
</feature>
<feature type="binding site" evidence="1">
    <location>
        <begin position="54"/>
        <end position="80"/>
    </location>
    <ligand>
        <name>NADP(+)</name>
        <dbReference type="ChEBI" id="CHEBI:58349"/>
    </ligand>
</feature>
<feature type="binding site" evidence="1">
    <location>
        <position position="105"/>
    </location>
    <ligand>
        <name>NADP(+)</name>
        <dbReference type="ChEBI" id="CHEBI:58349"/>
    </ligand>
</feature>
<feature type="binding site" evidence="1">
    <location>
        <position position="184"/>
    </location>
    <ligand>
        <name>substrate</name>
    </ligand>
</feature>
<feature type="binding site" evidence="1">
    <location>
        <begin position="197"/>
        <end position="201"/>
    </location>
    <ligand>
        <name>NADP(+)</name>
        <dbReference type="ChEBI" id="CHEBI:58349"/>
    </ligand>
</feature>
<feature type="binding site" evidence="1">
    <location>
        <position position="201"/>
    </location>
    <ligand>
        <name>NADP(+)</name>
        <dbReference type="ChEBI" id="CHEBI:58349"/>
    </ligand>
</feature>
<gene>
    <name type="primary">HSD7</name>
    <name type="ordered locus">At5g50690</name>
    <name type="ORF">MFB16.8</name>
</gene>
<sequence length="299" mass="33248">MDLNNKIFNILLPIVTVSFLLVFMPFSIFFKLLQFIRGCKESEKVNGKVVIITGSSSGIGEHLAYEYARRGAYLTLVARREDRLQVVADRCRKLGSPDVAVVRGDVSVIKDCKRFVQETISRFGRLDHLVNNAGIAEAKFFEDYSEISDVLPIVNTNFWGPVYATHFAIPHLKKTKGKIIAVASPAGWSGVPRMSIYAASKAAMINFYETLRIELHPEVGVTIVFPGLIENGNTNPDLLAEKQDWSQVVTIESAAECAKAVVNGICRGKTFVAEPSWVRVLFWLSAICPELLISKPKRN</sequence>
<comment type="subcellular location">
    <subcellularLocation>
        <location evidence="4">Membrane</location>
        <topology evidence="4">Single-pass type II membrane protein</topology>
    </subcellularLocation>
</comment>
<comment type="similarity">
    <text evidence="4">Belongs to the short-chain dehydrogenases/reductases (SDR) family.</text>
</comment>
<accession>Q9LUF2</accession>
<accession>Q9FGP2</accession>
<dbReference type="EC" id="1.1.1.-"/>
<dbReference type="EMBL" id="AB023037">
    <property type="protein sequence ID" value="BAA96982.1"/>
    <property type="molecule type" value="Genomic_DNA"/>
</dbReference>
<dbReference type="EMBL" id="CP002688">
    <property type="protein sequence ID" value="AED95980.1"/>
    <property type="molecule type" value="Genomic_DNA"/>
</dbReference>
<dbReference type="EMBL" id="DQ056713">
    <property type="protein sequence ID" value="AAY78859.1"/>
    <property type="molecule type" value="mRNA"/>
</dbReference>
<dbReference type="EMBL" id="BT026066">
    <property type="protein sequence ID" value="ABG48422.1"/>
    <property type="molecule type" value="mRNA"/>
</dbReference>
<dbReference type="RefSeq" id="NP_680417.1">
    <property type="nucleotide sequence ID" value="NM_148112.2"/>
</dbReference>
<dbReference type="SMR" id="Q9LUF2"/>
<dbReference type="BioGRID" id="20374">
    <property type="interactions" value="1"/>
</dbReference>
<dbReference type="BioGRID" id="20386">
    <property type="interactions" value="1"/>
</dbReference>
<dbReference type="FunCoup" id="Q9LUF2">
    <property type="interactions" value="117"/>
</dbReference>
<dbReference type="STRING" id="3702.Q9LUF2"/>
<dbReference type="EnsemblPlants" id="AT5G50590.1">
    <property type="protein sequence ID" value="AT5G50590.1"/>
    <property type="gene ID" value="AT5G50590"/>
</dbReference>
<dbReference type="EnsemblPlants" id="AT5G50690.1">
    <property type="protein sequence ID" value="AT5G50690.1"/>
    <property type="gene ID" value="AT5G50690"/>
</dbReference>
<dbReference type="GeneID" id="835140"/>
<dbReference type="Gramene" id="AT5G50590.1">
    <property type="protein sequence ID" value="AT5G50590.1"/>
    <property type="gene ID" value="AT5G50590"/>
</dbReference>
<dbReference type="Gramene" id="AT5G50690.1">
    <property type="protein sequence ID" value="AT5G50690.1"/>
    <property type="gene ID" value="AT5G50690"/>
</dbReference>
<dbReference type="KEGG" id="ath:AT5G50590"/>
<dbReference type="KEGG" id="ath:AT5G50690"/>
<dbReference type="Araport" id="AT5G50690"/>
<dbReference type="TAIR" id="AT5G50690">
    <property type="gene designation" value="HSD7"/>
</dbReference>
<dbReference type="HOGENOM" id="CLU_010194_2_1_1"/>
<dbReference type="InParanoid" id="Q9LUF2"/>
<dbReference type="PhylomeDB" id="Q9LUF2"/>
<dbReference type="PRO" id="PR:Q9LUF2"/>
<dbReference type="Proteomes" id="UP000006548">
    <property type="component" value="Chromosome 5"/>
</dbReference>
<dbReference type="ExpressionAtlas" id="Q9LUF2">
    <property type="expression patterns" value="baseline"/>
</dbReference>
<dbReference type="GO" id="GO:0016020">
    <property type="term" value="C:membrane"/>
    <property type="evidence" value="ECO:0007669"/>
    <property type="project" value="UniProtKB-SubCell"/>
</dbReference>
<dbReference type="GO" id="GO:0016491">
    <property type="term" value="F:oxidoreductase activity"/>
    <property type="evidence" value="ECO:0007669"/>
    <property type="project" value="UniProtKB-KW"/>
</dbReference>
<dbReference type="GO" id="GO:0006694">
    <property type="term" value="P:steroid biosynthetic process"/>
    <property type="evidence" value="ECO:0007669"/>
    <property type="project" value="UniProtKB-KW"/>
</dbReference>
<dbReference type="CDD" id="cd05332">
    <property type="entry name" value="11beta-HSD1_like_SDR_c"/>
    <property type="match status" value="1"/>
</dbReference>
<dbReference type="Gene3D" id="3.40.50.720">
    <property type="entry name" value="NAD(P)-binding Rossmann-like Domain"/>
    <property type="match status" value="1"/>
</dbReference>
<dbReference type="InterPro" id="IPR036291">
    <property type="entry name" value="NAD(P)-bd_dom_sf"/>
</dbReference>
<dbReference type="InterPro" id="IPR020904">
    <property type="entry name" value="Sc_DH/Rdtase_CS"/>
</dbReference>
<dbReference type="InterPro" id="IPR002347">
    <property type="entry name" value="SDR_fam"/>
</dbReference>
<dbReference type="NCBIfam" id="NF004825">
    <property type="entry name" value="PRK06181.1"/>
    <property type="match status" value="1"/>
</dbReference>
<dbReference type="PANTHER" id="PTHR43391:SF90">
    <property type="entry name" value="11-BETA-HYDROXYSTEROID DEHYDROGENASE-LIKE 4A-RELATED"/>
    <property type="match status" value="1"/>
</dbReference>
<dbReference type="PANTHER" id="PTHR43391">
    <property type="entry name" value="RETINOL DEHYDROGENASE-RELATED"/>
    <property type="match status" value="1"/>
</dbReference>
<dbReference type="Pfam" id="PF00106">
    <property type="entry name" value="adh_short"/>
    <property type="match status" value="1"/>
</dbReference>
<dbReference type="PRINTS" id="PR00081">
    <property type="entry name" value="GDHRDH"/>
</dbReference>
<dbReference type="PRINTS" id="PR00080">
    <property type="entry name" value="SDRFAMILY"/>
</dbReference>
<dbReference type="SUPFAM" id="SSF51735">
    <property type="entry name" value="NAD(P)-binding Rossmann-fold domains"/>
    <property type="match status" value="1"/>
</dbReference>
<dbReference type="PROSITE" id="PS00061">
    <property type="entry name" value="ADH_SHORT"/>
    <property type="match status" value="1"/>
</dbReference>
<reference key="1">
    <citation type="journal article" date="2000" name="DNA Res.">
        <title>Structural analysis of Arabidopsis thaliana chromosome 5. X. Sequence features of the regions of 3,076,755 bp covered by sixty P1 and TAC clones.</title>
        <authorList>
            <person name="Sato S."/>
            <person name="Nakamura Y."/>
            <person name="Kaneko T."/>
            <person name="Katoh T."/>
            <person name="Asamizu E."/>
            <person name="Kotani H."/>
            <person name="Tabata S."/>
        </authorList>
    </citation>
    <scope>NUCLEOTIDE SEQUENCE [LARGE SCALE GENOMIC DNA]</scope>
    <source>
        <strain>cv. Columbia</strain>
    </source>
</reference>
<reference key="2">
    <citation type="journal article" date="2017" name="Plant J.">
        <title>Araport11: a complete reannotation of the Arabidopsis thaliana reference genome.</title>
        <authorList>
            <person name="Cheng C.Y."/>
            <person name="Krishnakumar V."/>
            <person name="Chan A.P."/>
            <person name="Thibaud-Nissen F."/>
            <person name="Schobel S."/>
            <person name="Town C.D."/>
        </authorList>
    </citation>
    <scope>GENOME REANNOTATION</scope>
    <source>
        <strain>cv. Columbia</strain>
    </source>
</reference>
<reference key="3">
    <citation type="submission" date="2005-05" db="EMBL/GenBank/DDBJ databases">
        <authorList>
            <person name="Underwood B.A."/>
            <person name="Xiao Y.-L."/>
            <person name="Moskal W.A. Jr."/>
            <person name="Monaghan E.L."/>
            <person name="Wang W."/>
            <person name="Redman J.C."/>
            <person name="Wu H.C."/>
            <person name="Utterback T."/>
            <person name="Town C.D."/>
        </authorList>
    </citation>
    <scope>NUCLEOTIDE SEQUENCE [LARGE SCALE MRNA]</scope>
    <source>
        <strain>cv. Columbia</strain>
    </source>
</reference>
<reference key="4">
    <citation type="submission" date="2006-07" db="EMBL/GenBank/DDBJ databases">
        <title>Arabidopsis ORF clones.</title>
        <authorList>
            <person name="Quinitio C."/>
            <person name="Chen H."/>
            <person name="Kim C.J."/>
            <person name="Shinn P."/>
            <person name="Ecker J.R."/>
        </authorList>
    </citation>
    <scope>NUCLEOTIDE SEQUENCE [LARGE SCALE MRNA]</scope>
    <source>
        <strain>cv. Columbia</strain>
    </source>
</reference>
<reference key="5">
    <citation type="journal article" date="2007" name="Plant Physiol.">
        <title>A putative hydroxysteroid dehydrogenase involved in regulating plant growth and development.</title>
        <authorList>
            <person name="Li F."/>
            <person name="Asami T."/>
            <person name="Wu X."/>
            <person name="Tsang E.W."/>
            <person name="Cutler A.J."/>
        </authorList>
    </citation>
    <scope>GENE FAMILY</scope>
</reference>
<reference key="6">
    <citation type="journal article" date="2009" name="Plant Cell Physiol.">
        <title>Regulation of HSD1 in seeds of Arabidopsis thaliana.</title>
        <authorList>
            <person name="Baud S."/>
            <person name="Dichow N.R."/>
            <person name="Kelemen Z."/>
            <person name="d'Andrea S."/>
            <person name="To A."/>
            <person name="Berger N."/>
            <person name="Canonge M."/>
            <person name="Kronenberger J."/>
            <person name="Viterbo D."/>
            <person name="Dubreucq B."/>
            <person name="Lepiniec L."/>
            <person name="Chardot T."/>
            <person name="Miquel M."/>
        </authorList>
    </citation>
    <scope>GENE FAMILY</scope>
</reference>
<proteinExistence type="evidence at transcript level"/>
<organism>
    <name type="scientific">Arabidopsis thaliana</name>
    <name type="common">Mouse-ear cress</name>
    <dbReference type="NCBI Taxonomy" id="3702"/>
    <lineage>
        <taxon>Eukaryota</taxon>
        <taxon>Viridiplantae</taxon>
        <taxon>Streptophyta</taxon>
        <taxon>Embryophyta</taxon>
        <taxon>Tracheophyta</taxon>
        <taxon>Spermatophyta</taxon>
        <taxon>Magnoliopsida</taxon>
        <taxon>eudicotyledons</taxon>
        <taxon>Gunneridae</taxon>
        <taxon>Pentapetalae</taxon>
        <taxon>rosids</taxon>
        <taxon>malvids</taxon>
        <taxon>Brassicales</taxon>
        <taxon>Brassicaceae</taxon>
        <taxon>Camelineae</taxon>
        <taxon>Arabidopsis</taxon>
    </lineage>
</organism>
<keyword id="KW-0444">Lipid biosynthesis</keyword>
<keyword id="KW-0443">Lipid metabolism</keyword>
<keyword id="KW-0472">Membrane</keyword>
<keyword id="KW-0521">NADP</keyword>
<keyword id="KW-0560">Oxidoreductase</keyword>
<keyword id="KW-1185">Reference proteome</keyword>
<keyword id="KW-0735">Signal-anchor</keyword>
<keyword id="KW-0752">Steroid biosynthesis</keyword>
<keyword id="KW-0812">Transmembrane</keyword>
<keyword id="KW-1133">Transmembrane helix</keyword>
<name>HSD4B_ARATH</name>
<evidence type="ECO:0000250" key="1"/>
<evidence type="ECO:0000255" key="2"/>
<evidence type="ECO:0000255" key="3">
    <source>
        <dbReference type="PROSITE-ProRule" id="PRU10001"/>
    </source>
</evidence>
<evidence type="ECO:0000305" key="4"/>